<feature type="chain" id="PRO_1000123210" description="DNA mismatch repair protein MutL">
    <location>
        <begin position="1"/>
        <end position="603"/>
    </location>
</feature>
<organism>
    <name type="scientific">Listeria monocytogenes serotype 4a (strain HCC23)</name>
    <dbReference type="NCBI Taxonomy" id="552536"/>
    <lineage>
        <taxon>Bacteria</taxon>
        <taxon>Bacillati</taxon>
        <taxon>Bacillota</taxon>
        <taxon>Bacilli</taxon>
        <taxon>Bacillales</taxon>
        <taxon>Listeriaceae</taxon>
        <taxon>Listeria</taxon>
    </lineage>
</organism>
<gene>
    <name evidence="1" type="primary">mutL</name>
    <name type="ordered locus">LMHCC_1165</name>
</gene>
<accession>B8DFS3</accession>
<protein>
    <recommendedName>
        <fullName evidence="1">DNA mismatch repair protein MutL</fullName>
    </recommendedName>
</protein>
<name>MUTL_LISMH</name>
<dbReference type="EMBL" id="CP001175">
    <property type="protein sequence ID" value="ACK39513.1"/>
    <property type="molecule type" value="Genomic_DNA"/>
</dbReference>
<dbReference type="RefSeq" id="WP_012581340.1">
    <property type="nucleotide sequence ID" value="NC_011660.1"/>
</dbReference>
<dbReference type="SMR" id="B8DFS3"/>
<dbReference type="KEGG" id="lmh:LMHCC_1165"/>
<dbReference type="HOGENOM" id="CLU_004131_4_1_9"/>
<dbReference type="GO" id="GO:0032300">
    <property type="term" value="C:mismatch repair complex"/>
    <property type="evidence" value="ECO:0007669"/>
    <property type="project" value="InterPro"/>
</dbReference>
<dbReference type="GO" id="GO:0005524">
    <property type="term" value="F:ATP binding"/>
    <property type="evidence" value="ECO:0007669"/>
    <property type="project" value="InterPro"/>
</dbReference>
<dbReference type="GO" id="GO:0016887">
    <property type="term" value="F:ATP hydrolysis activity"/>
    <property type="evidence" value="ECO:0007669"/>
    <property type="project" value="InterPro"/>
</dbReference>
<dbReference type="GO" id="GO:0140664">
    <property type="term" value="F:ATP-dependent DNA damage sensor activity"/>
    <property type="evidence" value="ECO:0007669"/>
    <property type="project" value="InterPro"/>
</dbReference>
<dbReference type="GO" id="GO:0030983">
    <property type="term" value="F:mismatched DNA binding"/>
    <property type="evidence" value="ECO:0007669"/>
    <property type="project" value="InterPro"/>
</dbReference>
<dbReference type="GO" id="GO:0006298">
    <property type="term" value="P:mismatch repair"/>
    <property type="evidence" value="ECO:0007669"/>
    <property type="project" value="UniProtKB-UniRule"/>
</dbReference>
<dbReference type="CDD" id="cd16926">
    <property type="entry name" value="HATPase_MutL-MLH-PMS-like"/>
    <property type="match status" value="1"/>
</dbReference>
<dbReference type="CDD" id="cd00782">
    <property type="entry name" value="MutL_Trans"/>
    <property type="match status" value="1"/>
</dbReference>
<dbReference type="FunFam" id="3.30.1370.100:FF:000004">
    <property type="entry name" value="DNA mismatch repair endonuclease MutL"/>
    <property type="match status" value="1"/>
</dbReference>
<dbReference type="FunFam" id="3.30.230.10:FF:000036">
    <property type="entry name" value="DNA mismatch repair endonuclease MutL"/>
    <property type="match status" value="1"/>
</dbReference>
<dbReference type="FunFam" id="3.30.565.10:FF:000003">
    <property type="entry name" value="DNA mismatch repair endonuclease MutL"/>
    <property type="match status" value="1"/>
</dbReference>
<dbReference type="Gene3D" id="3.30.230.10">
    <property type="match status" value="1"/>
</dbReference>
<dbReference type="Gene3D" id="3.30.565.10">
    <property type="entry name" value="Histidine kinase-like ATPase, C-terminal domain"/>
    <property type="match status" value="1"/>
</dbReference>
<dbReference type="Gene3D" id="3.30.1540.20">
    <property type="entry name" value="MutL, C-terminal domain, dimerisation subdomain"/>
    <property type="match status" value="1"/>
</dbReference>
<dbReference type="Gene3D" id="3.30.1370.100">
    <property type="entry name" value="MutL, C-terminal domain, regulatory subdomain"/>
    <property type="match status" value="1"/>
</dbReference>
<dbReference type="HAMAP" id="MF_00149">
    <property type="entry name" value="DNA_mis_repair"/>
    <property type="match status" value="1"/>
</dbReference>
<dbReference type="InterPro" id="IPR014762">
    <property type="entry name" value="DNA_mismatch_repair_CS"/>
</dbReference>
<dbReference type="InterPro" id="IPR020667">
    <property type="entry name" value="DNA_mismatch_repair_MutL"/>
</dbReference>
<dbReference type="InterPro" id="IPR013507">
    <property type="entry name" value="DNA_mismatch_S5_2-like"/>
</dbReference>
<dbReference type="InterPro" id="IPR036890">
    <property type="entry name" value="HATPase_C_sf"/>
</dbReference>
<dbReference type="InterPro" id="IPR002099">
    <property type="entry name" value="MutL/Mlh/PMS"/>
</dbReference>
<dbReference type="InterPro" id="IPR038973">
    <property type="entry name" value="MutL/Mlh/Pms-like"/>
</dbReference>
<dbReference type="InterPro" id="IPR014790">
    <property type="entry name" value="MutL_C"/>
</dbReference>
<dbReference type="InterPro" id="IPR042120">
    <property type="entry name" value="MutL_C_dimsub"/>
</dbReference>
<dbReference type="InterPro" id="IPR042121">
    <property type="entry name" value="MutL_C_regsub"/>
</dbReference>
<dbReference type="InterPro" id="IPR037198">
    <property type="entry name" value="MutL_C_sf"/>
</dbReference>
<dbReference type="InterPro" id="IPR020568">
    <property type="entry name" value="Ribosomal_Su5_D2-typ_SF"/>
</dbReference>
<dbReference type="InterPro" id="IPR014721">
    <property type="entry name" value="Ribsml_uS5_D2-typ_fold_subgr"/>
</dbReference>
<dbReference type="NCBIfam" id="TIGR00585">
    <property type="entry name" value="mutl"/>
    <property type="match status" value="1"/>
</dbReference>
<dbReference type="PANTHER" id="PTHR10073">
    <property type="entry name" value="DNA MISMATCH REPAIR PROTEIN MLH, PMS, MUTL"/>
    <property type="match status" value="1"/>
</dbReference>
<dbReference type="PANTHER" id="PTHR10073:SF12">
    <property type="entry name" value="DNA MISMATCH REPAIR PROTEIN MLH1"/>
    <property type="match status" value="1"/>
</dbReference>
<dbReference type="Pfam" id="PF01119">
    <property type="entry name" value="DNA_mis_repair"/>
    <property type="match status" value="1"/>
</dbReference>
<dbReference type="Pfam" id="PF13589">
    <property type="entry name" value="HATPase_c_3"/>
    <property type="match status" value="1"/>
</dbReference>
<dbReference type="Pfam" id="PF08676">
    <property type="entry name" value="MutL_C"/>
    <property type="match status" value="1"/>
</dbReference>
<dbReference type="SMART" id="SM01340">
    <property type="entry name" value="DNA_mis_repair"/>
    <property type="match status" value="1"/>
</dbReference>
<dbReference type="SMART" id="SM00853">
    <property type="entry name" value="MutL_C"/>
    <property type="match status" value="1"/>
</dbReference>
<dbReference type="SUPFAM" id="SSF55874">
    <property type="entry name" value="ATPase domain of HSP90 chaperone/DNA topoisomerase II/histidine kinase"/>
    <property type="match status" value="1"/>
</dbReference>
<dbReference type="SUPFAM" id="SSF118116">
    <property type="entry name" value="DNA mismatch repair protein MutL"/>
    <property type="match status" value="1"/>
</dbReference>
<dbReference type="SUPFAM" id="SSF54211">
    <property type="entry name" value="Ribosomal protein S5 domain 2-like"/>
    <property type="match status" value="1"/>
</dbReference>
<dbReference type="PROSITE" id="PS00058">
    <property type="entry name" value="DNA_MISMATCH_REPAIR_1"/>
    <property type="match status" value="1"/>
</dbReference>
<evidence type="ECO:0000255" key="1">
    <source>
        <dbReference type="HAMAP-Rule" id="MF_00149"/>
    </source>
</evidence>
<proteinExistence type="inferred from homology"/>
<sequence>MAKHIVELTDALSNKIAAGEVVERPASVVKELVENAIDAGSTVIDILVEEAGLNKITIIDNGSGIEEEDVATAFLRHATSKIKNEADLFRVHTLGFRGEALPSIASVSHLSMETSTGETKGTTITLEGGKIIEQKSGHARKGTQIEVSQLFFNTPARLKYLKSLPTELGNITDILNRLALAHPDISFRFSHNGKPLLQTNGNGDLRQVIAAIYGVSIARKSIPVKAESLDFKISGYAVLPEVNRSNRNYISTIINGRFIKNFALVKAIQEGYHTLLPIGRFPIIVLQIEMDPIIVDVNVHPAKLEVRLSKEKELGQLISQMIKEAFHKLQLIPDGEISKKQKEVQKSEQIQMSFEENKPQKETPTLFSKSSIPEYVPSDLDAPREDDFILETMPSYEPEQEVEHAEQPKERIPKMYPIGQMHATYIFAQNENGLYIIDQHAAQERIKYEFYREKIGEVSRELQELLVPIVLEFPADEYVRLEEQKAKLEEVGVFLENFGQNSFIIRAHPTWFPKDQEEEMLREIIDEALSAPSISIHKLREDTAIMMSCKKSIKANHYLTTQDMEALLDTLREASDPFTCPHGRPVIIQYSTYELEKMFKRVM</sequence>
<reference key="1">
    <citation type="journal article" date="2011" name="J. Bacteriol.">
        <title>Genome sequence of lineage III Listeria monocytogenes strain HCC23.</title>
        <authorList>
            <person name="Steele C.L."/>
            <person name="Donaldson J.R."/>
            <person name="Paul D."/>
            <person name="Banes M.M."/>
            <person name="Arick T."/>
            <person name="Bridges S.M."/>
            <person name="Lawrence M.L."/>
        </authorList>
    </citation>
    <scope>NUCLEOTIDE SEQUENCE [LARGE SCALE GENOMIC DNA]</scope>
    <source>
        <strain>HCC23</strain>
    </source>
</reference>
<keyword id="KW-0227">DNA damage</keyword>
<keyword id="KW-0234">DNA repair</keyword>
<comment type="function">
    <text evidence="1">This protein is involved in the repair of mismatches in DNA. It is required for dam-dependent methyl-directed DNA mismatch repair. May act as a 'molecular matchmaker', a protein that promotes the formation of a stable complex between two or more DNA-binding proteins in an ATP-dependent manner without itself being part of a final effector complex.</text>
</comment>
<comment type="similarity">
    <text evidence="1">Belongs to the DNA mismatch repair MutL/HexB family.</text>
</comment>